<organism>
    <name type="scientific">Homo sapiens</name>
    <name type="common">Human</name>
    <dbReference type="NCBI Taxonomy" id="9606"/>
    <lineage>
        <taxon>Eukaryota</taxon>
        <taxon>Metazoa</taxon>
        <taxon>Chordata</taxon>
        <taxon>Craniata</taxon>
        <taxon>Vertebrata</taxon>
        <taxon>Euteleostomi</taxon>
        <taxon>Mammalia</taxon>
        <taxon>Eutheria</taxon>
        <taxon>Euarchontoglires</taxon>
        <taxon>Primates</taxon>
        <taxon>Haplorrhini</taxon>
        <taxon>Catarrhini</taxon>
        <taxon>Hominidae</taxon>
        <taxon>Homo</taxon>
    </lineage>
</organism>
<keyword id="KW-0002">3D-structure</keyword>
<keyword id="KW-0007">Acetylation</keyword>
<keyword id="KW-0009">Actin-binding</keyword>
<keyword id="KW-0025">Alternative splicing</keyword>
<keyword id="KW-0160">Chromosomal rearrangement</keyword>
<keyword id="KW-0175">Coiled coil</keyword>
<keyword id="KW-0963">Cytoplasm</keyword>
<keyword id="KW-0206">Cytoskeleton</keyword>
<keyword id="KW-0903">Direct protein sequencing</keyword>
<keyword id="KW-0225">Disease variant</keyword>
<keyword id="KW-0514">Muscle protein</keyword>
<keyword id="KW-1057">Nemaline myopathy</keyword>
<keyword id="KW-0597">Phosphoprotein</keyword>
<keyword id="KW-1267">Proteomics identification</keyword>
<keyword id="KW-0656">Proto-oncogene</keyword>
<keyword id="KW-1185">Reference proteome</keyword>
<gene>
    <name type="primary">TPM3</name>
</gene>
<comment type="function">
    <text evidence="4">Binds to actin filaments in muscle and non-muscle cells. Plays a central role, in association with the troponin complex, in the calcium dependent regulation of vertebrate striated muscle contraction. Smooth muscle contraction is regulated by interaction with caldesmon. In non-muscle cells is implicated in stabilizing cytoskeleton actin filaments.</text>
</comment>
<comment type="subunit">
    <text evidence="2 21 23">Homodimer. Heterodimer of an alpha (TPM1, TPM3 or TPM4) and a beta (TPM2) chain (By similarity). Interacts with TMOD1 (PubMed:8002995). Interacts with TNNT1 (PubMed:35510366).</text>
</comment>
<comment type="interaction">
    <interactant intactId="EBI-355607">
        <id>P06753</id>
    </interactant>
    <interactant intactId="EBI-930964">
        <id>P54253</id>
        <label>ATXN1</label>
    </interactant>
    <organismsDiffer>false</organismsDiffer>
    <experiments>4</experiments>
</comment>
<comment type="interaction">
    <interactant intactId="EBI-355607">
        <id>P06753</id>
    </interactant>
    <interactant intactId="EBI-747505">
        <id>Q8TAB5</id>
        <label>C1orf216</label>
    </interactant>
    <organismsDiffer>false</organismsDiffer>
    <experiments>4</experiments>
</comment>
<comment type="interaction">
    <interactant intactId="EBI-355607">
        <id>P06753</id>
    </interactant>
    <interactant intactId="EBI-3893101">
        <id>Q969G5</id>
        <label>CAVIN3</label>
    </interactant>
    <organismsDiffer>false</organismsDiffer>
    <experiments>4</experiments>
</comment>
<comment type="interaction">
    <interactant intactId="EBI-355607">
        <id>P06753</id>
    </interactant>
    <interactant intactId="EBI-10175300">
        <id>Q8TD31-3</id>
        <label>CCHCR1</label>
    </interactant>
    <organismsDiffer>false</organismsDiffer>
    <experiments>13</experiments>
</comment>
<comment type="interaction">
    <interactant intactId="EBI-355607">
        <id>P06753</id>
    </interactant>
    <interactant intactId="EBI-2870039">
        <id>Q8IZT9</id>
        <label>FAM9C</label>
    </interactant>
    <organismsDiffer>false</organismsDiffer>
    <experiments>8</experiments>
</comment>
<comment type="interaction">
    <interactant intactId="EBI-355607">
        <id>P06753</id>
    </interactant>
    <interactant intactId="EBI-9640259">
        <id>P02671-2</id>
        <label>FGA</label>
    </interactant>
    <organismsDiffer>false</organismsDiffer>
    <experiments>3</experiments>
</comment>
<comment type="interaction">
    <interactant intactId="EBI-355607">
        <id>P06753</id>
    </interactant>
    <interactant intactId="EBI-2556750">
        <id>Q03933</id>
        <label>HSF2</label>
    </interactant>
    <organismsDiffer>false</organismsDiffer>
    <experiments>10</experiments>
</comment>
<comment type="interaction">
    <interactant intactId="EBI-355607">
        <id>P06753</id>
    </interactant>
    <interactant intactId="EBI-12056251">
        <id>Q9ULV5-2</id>
        <label>HSF4</label>
    </interactant>
    <organismsDiffer>false</organismsDiffer>
    <experiments>3</experiments>
</comment>
<comment type="interaction">
    <interactant intactId="EBI-355607">
        <id>P06753</id>
    </interactant>
    <interactant intactId="EBI-745127">
        <id>O14879</id>
        <label>IFIT3</label>
    </interactant>
    <organismsDiffer>false</organismsDiffer>
    <experiments>5</experiments>
</comment>
<comment type="interaction">
    <interactant intactId="EBI-355607">
        <id>P06753</id>
    </interactant>
    <interactant intactId="EBI-739657">
        <id>Q9BQD3</id>
        <label>KXD1</label>
    </interactant>
    <organismsDiffer>false</organismsDiffer>
    <experiments>13</experiments>
</comment>
<comment type="interaction">
    <interactant intactId="EBI-355607">
        <id>P06753</id>
    </interactant>
    <interactant intactId="EBI-8473670">
        <id>O95447</id>
        <label>LCA5L</label>
    </interactant>
    <organismsDiffer>false</organismsDiffer>
    <experiments>4</experiments>
</comment>
<comment type="interaction">
    <interactant intactId="EBI-355607">
        <id>P06753</id>
    </interactant>
    <interactant intactId="EBI-741355">
        <id>Q96LR2</id>
        <label>LURAP1</label>
    </interactant>
    <organismsDiffer>false</organismsDiffer>
    <experiments>4</experiments>
</comment>
<comment type="interaction">
    <interactant intactId="EBI-355607">
        <id>P06753</id>
    </interactant>
    <interactant intactId="EBI-742610">
        <id>Q9Y6D9</id>
        <label>MAD1L1</label>
    </interactant>
    <organismsDiffer>false</organismsDiffer>
    <experiments>10</experiments>
</comment>
<comment type="interaction">
    <interactant intactId="EBI-355607">
        <id>P06753</id>
    </interactant>
    <interactant intactId="EBI-741048">
        <id>Q7Z3B4</id>
        <label>NUP54</label>
    </interactant>
    <organismsDiffer>false</organismsDiffer>
    <experiments>6</experiments>
</comment>
<comment type="interaction">
    <interactant intactId="EBI-355607">
        <id>P06753</id>
    </interactant>
    <interactant intactId="EBI-536879">
        <id>O43482</id>
        <label>OIP5</label>
    </interactant>
    <organismsDiffer>false</organismsDiffer>
    <experiments>12</experiments>
</comment>
<comment type="interaction">
    <interactant intactId="EBI-355607">
        <id>P06753</id>
    </interactant>
    <interactant intactId="EBI-11018958">
        <id>Q6NSJ2-2</id>
        <label>PHLDB3</label>
    </interactant>
    <organismsDiffer>false</organismsDiffer>
    <experiments>3</experiments>
</comment>
<comment type="interaction">
    <interactant intactId="EBI-355607">
        <id>P06753</id>
    </interactant>
    <interactant intactId="EBI-357745">
        <id>P62195</id>
        <label>PSMC5</label>
    </interactant>
    <organismsDiffer>false</organismsDiffer>
    <experiments>3</experiments>
</comment>
<comment type="interaction">
    <interactant intactId="EBI-355607">
        <id>P06753</id>
    </interactant>
    <interactant intactId="EBI-296723">
        <id>O95295</id>
        <label>SNAPIN</label>
    </interactant>
    <organismsDiffer>false</organismsDiffer>
    <experiments>3</experiments>
</comment>
<comment type="interaction">
    <interactant intactId="EBI-355607">
        <id>P06753</id>
    </interactant>
    <interactant intactId="EBI-6872807">
        <id>Q8N0S2</id>
        <label>SYCE1</label>
    </interactant>
    <organismsDiffer>false</organismsDiffer>
    <experiments>7</experiments>
</comment>
<comment type="interaction">
    <interactant intactId="EBI-355607">
        <id>P06753</id>
    </interactant>
    <interactant intactId="EBI-358708">
        <id>Q9NYJ8</id>
        <label>TAB2</label>
    </interactant>
    <organismsDiffer>false</organismsDiffer>
    <experiments>3</experiments>
</comment>
<comment type="interaction">
    <interactant intactId="EBI-355607">
        <id>P06753</id>
    </interactant>
    <interactant intactId="EBI-1245626">
        <id>P0C1Z6</id>
        <label>TFPT</label>
    </interactant>
    <organismsDiffer>false</organismsDiffer>
    <experiments>14</experiments>
</comment>
<comment type="interaction">
    <interactant intactId="EBI-355607">
        <id>P06753</id>
    </interactant>
    <interactant intactId="EBI-10178002">
        <id>P0C1Z6-2</id>
        <label>TFPT</label>
    </interactant>
    <organismsDiffer>false</organismsDiffer>
    <experiments>3</experiments>
</comment>
<comment type="interaction">
    <interactant intactId="EBI-355607">
        <id>P06753</id>
    </interactant>
    <interactant intactId="EBI-741515">
        <id>Q9NVV9</id>
        <label>THAP1</label>
    </interactant>
    <organismsDiffer>false</organismsDiffer>
    <experiments>6</experiments>
</comment>
<comment type="interaction">
    <interactant intactId="EBI-355607">
        <id>P06753</id>
    </interactant>
    <interactant intactId="EBI-741350">
        <id>Q9BT49</id>
        <label>THAP7</label>
    </interactant>
    <organismsDiffer>false</organismsDiffer>
    <experiments>3</experiments>
</comment>
<comment type="interaction">
    <interactant intactId="EBI-355607">
        <id>P06753</id>
    </interactant>
    <interactant intactId="EBI-746692">
        <id>P19237</id>
        <label>TNNI1</label>
    </interactant>
    <organismsDiffer>false</organismsDiffer>
    <experiments>3</experiments>
</comment>
<comment type="interaction">
    <interactant intactId="EBI-355607">
        <id>P06753</id>
    </interactant>
    <interactant intactId="EBI-12151635">
        <id>P13805-3</id>
        <label>TNNT1</label>
    </interactant>
    <organismsDiffer>false</organismsDiffer>
    <experiments>3</experiments>
</comment>
<comment type="interaction">
    <interactant intactId="EBI-355607">
        <id>P06753</id>
    </interactant>
    <interactant intactId="EBI-1642100">
        <id>P67936</id>
        <label>TPM4</label>
    </interactant>
    <organismsDiffer>false</organismsDiffer>
    <experiments>5</experiments>
</comment>
<comment type="interaction">
    <interactant intactId="EBI-355607">
        <id>P06753</id>
    </interactant>
    <interactant intactId="EBI-852101">
        <id>Q9UJT2</id>
        <label>TSKS</label>
    </interactant>
    <organismsDiffer>false</organismsDiffer>
    <experiments>3</experiments>
</comment>
<comment type="interaction">
    <interactant intactId="EBI-355607">
        <id>P06753</id>
    </interactant>
    <interactant intactId="EBI-2799833">
        <id>Q8N1B4</id>
        <label>VPS52</label>
    </interactant>
    <organismsDiffer>false</organismsDiffer>
    <experiments>3</experiments>
</comment>
<comment type="interaction">
    <interactant intactId="EBI-10977875">
        <id>P06753-2</id>
    </interactant>
    <interactant intactId="EBI-11954292">
        <id>Q86V38</id>
        <label>ATN1</label>
    </interactant>
    <organismsDiffer>false</organismsDiffer>
    <experiments>3</experiments>
</comment>
<comment type="interaction">
    <interactant intactId="EBI-10977875">
        <id>P06753-2</id>
    </interactant>
    <interactant intactId="EBI-930964">
        <id>P54253</id>
        <label>ATXN1</label>
    </interactant>
    <organismsDiffer>false</organismsDiffer>
    <experiments>3</experiments>
</comment>
<comment type="interaction">
    <interactant intactId="EBI-10977875">
        <id>P06753-2</id>
    </interactant>
    <interactant intactId="EBI-11282723">
        <id>Q9Y5Z0</id>
        <label>BACE2</label>
    </interactant>
    <organismsDiffer>false</organismsDiffer>
    <experiments>3</experiments>
</comment>
<comment type="interaction">
    <interactant intactId="EBI-10977875">
        <id>P06753-2</id>
    </interactant>
    <interactant intactId="EBI-2432309">
        <id>Q92876</id>
        <label>KLK6</label>
    </interactant>
    <organismsDiffer>false</organismsDiffer>
    <experiments>3</experiments>
</comment>
<comment type="subcellular location">
    <subcellularLocation>
        <location evidence="28">Cytoplasm</location>
        <location evidence="28">Cytoskeleton</location>
    </subcellularLocation>
</comment>
<comment type="alternative products">
    <event type="alternative splicing"/>
    <isoform>
        <id>P06753-1</id>
        <name>1</name>
        <name>Skeletal muscle</name>
        <sequence type="displayed"/>
    </isoform>
    <isoform>
        <id>P06753-2</id>
        <name>2</name>
        <name>Cytoskeletal</name>
        <name>TM30nm</name>
        <sequence type="described" ref="VSP_006604 VSP_006605 VSP_006606"/>
    </isoform>
    <isoform>
        <id>P06753-3</id>
        <name>3</name>
        <sequence type="described" ref="VSP_006604 VSP_006605 VSP_006607"/>
    </isoform>
    <isoform>
        <id>P06753-4</id>
        <name>4</name>
        <sequence type="described" ref="VSP_047302 VSP_047303 VSP_047304 VSP_047305 VSP_047306"/>
    </isoform>
    <isoform>
        <id>P06753-5</id>
        <name>5</name>
        <sequence type="described" ref="VSP_047302 VSP_047303 VSP_047304 VSP_006606"/>
    </isoform>
    <isoform>
        <id>P06753-6</id>
        <name>6</name>
        <sequence type="described" ref="VSP_006604 VSP_006605"/>
    </isoform>
    <isoform>
        <id>P06753-7</id>
        <name>7</name>
        <sequence type="described" ref="VSP_054792 VSP_006606"/>
    </isoform>
    <text>Additional isoforms seem to exist.</text>
</comment>
<comment type="domain">
    <text>The molecule is in a coiled coil structure that is formed by 2 polypeptide chains. The sequence exhibits a prominent seven-residues periodicity.</text>
</comment>
<comment type="disease" evidence="10 11 12 14 15 16 17 18 19 22">
    <disease id="DI-01413">
        <name>Congenital myopathy 4A, autosomal dominant</name>
        <acronym>CMYO4A</acronym>
        <description>A muscular disorder characterized by onset of muscle weakness in infancy or childhood. Most affected individuals show mildly delayed motor development, hypotonia, generalized muscle weakness, and weakness of the proximal limb muscles and neck muscles, resulting in difficulty running and easy fatigability. Many patients have respiratory insufficiency with reduced vital capacity. Skeletal muscle biopsy shows nemaline rod inclusions, subsarcolemmal 'cap' structures, and fiber-type disproportion.</description>
        <dbReference type="MIM" id="255310"/>
    </disease>
    <text>The disease is caused by variants affecting the gene represented in this entry.</text>
</comment>
<comment type="disease" evidence="13">
    <disease id="DI-02032">
        <name>Congenital myopathy 4B, autosomal recessive</name>
        <acronym>CMYO4B</acronym>
        <description>A muscular disorder characterized by muscle weakness appearing in infancy or early childhood. Most affected individuals show congenital contractures, delayed motor development, hypotonia, respiratory insufficiency, generalized muscle weakness, and weakness of the proximal limb muscles and neck muscles, resulting in difficulty walking or inability to walk. Skeletal muscle biopsy shows variable histologic findings, including nemaline rods, type 1 fiber predomination, and centralized nuclei.</description>
        <dbReference type="MIM" id="609284"/>
    </disease>
    <text>The disease is caused by variants affecting the gene represented in this entry.</text>
</comment>
<comment type="disease">
    <text evidence="20">A chromosomal aberration involving TPM3 is found in papillary thyroid carcinomas (PTCs). A rearrangement with NTRK1 generates the TRK fusion transcript by fusing the amino end of isoform 2 of TPM3 to the 3'-end of NTRK1.</text>
</comment>
<comment type="miscellaneous">
    <molecule>Isoform 2</molecule>
    <text evidence="24 25 28">Peptides 2-27, 41-55, 132-153, 163-169, 216-225 and 237-248 have been identified and sequenced by MS. PubMed:16201836 (ABC40673) sequence corresponds to a TPM3 retrocopy (rcTPM3) on chromosome 16 that is generated by retroposition of reversed transcribed mRNA back to the genome. rcTPM3 functionality is uncertain. It has been detected by MS in primary breast cancer tissues.</text>
</comment>
<comment type="miscellaneous">
    <molecule>Isoform 3</molecule>
    <text evidence="24 25 28">Peptides 2-27, 41-55, 132-153 and 163-169 have been identified and sequenced by MS.</text>
</comment>
<comment type="similarity">
    <text evidence="28">Belongs to the tropomyosin family.</text>
</comment>
<comment type="caution">
    <text evidence="28">It is uncertain whether Met-1 or Met-2 is the initiator.</text>
</comment>
<comment type="online information" name="Atlas of Genetics and Cytogenetics in Oncology and Haematology">
    <link uri="https://atlasgeneticsoncology.org/gene/225/TPM3"/>
</comment>
<name>TPM3_HUMAN</name>
<evidence type="ECO:0000250" key="1"/>
<evidence type="ECO:0000250" key="2">
    <source>
        <dbReference type="UniProtKB" id="P04692"/>
    </source>
</evidence>
<evidence type="ECO:0000250" key="3">
    <source>
        <dbReference type="UniProtKB" id="P07951"/>
    </source>
</evidence>
<evidence type="ECO:0000250" key="4">
    <source>
        <dbReference type="UniProtKB" id="P09493"/>
    </source>
</evidence>
<evidence type="ECO:0000250" key="5">
    <source>
        <dbReference type="UniProtKB" id="P21107"/>
    </source>
</evidence>
<evidence type="ECO:0000250" key="6">
    <source>
        <dbReference type="UniProtKB" id="P58774"/>
    </source>
</evidence>
<evidence type="ECO:0000250" key="7">
    <source>
        <dbReference type="UniProtKB" id="P58775"/>
    </source>
</evidence>
<evidence type="ECO:0000250" key="8">
    <source>
        <dbReference type="UniProtKB" id="P58776"/>
    </source>
</evidence>
<evidence type="ECO:0000256" key="9">
    <source>
        <dbReference type="SAM" id="MobiDB-lite"/>
    </source>
</evidence>
<evidence type="ECO:0000269" key="10">
    <source>
    </source>
</evidence>
<evidence type="ECO:0000269" key="11">
    <source>
    </source>
</evidence>
<evidence type="ECO:0000269" key="12">
    <source>
    </source>
</evidence>
<evidence type="ECO:0000269" key="13">
    <source>
    </source>
</evidence>
<evidence type="ECO:0000269" key="14">
    <source>
    </source>
</evidence>
<evidence type="ECO:0000269" key="15">
    <source>
    </source>
</evidence>
<evidence type="ECO:0000269" key="16">
    <source>
    </source>
</evidence>
<evidence type="ECO:0000269" key="17">
    <source>
    </source>
</evidence>
<evidence type="ECO:0000269" key="18">
    <source>
    </source>
</evidence>
<evidence type="ECO:0000269" key="19">
    <source>
    </source>
</evidence>
<evidence type="ECO:0000269" key="20">
    <source>
    </source>
</evidence>
<evidence type="ECO:0000269" key="21">
    <source>
    </source>
</evidence>
<evidence type="ECO:0000269" key="22">
    <source>
    </source>
</evidence>
<evidence type="ECO:0000269" key="23">
    <source>
    </source>
</evidence>
<evidence type="ECO:0000269" key="24">
    <source ref="10"/>
</evidence>
<evidence type="ECO:0000269" key="25">
    <source ref="9"/>
</evidence>
<evidence type="ECO:0000303" key="26">
    <source>
    </source>
</evidence>
<evidence type="ECO:0000303" key="27">
    <source>
    </source>
</evidence>
<evidence type="ECO:0000305" key="28"/>
<evidence type="ECO:0007744" key="29">
    <source>
    </source>
</evidence>
<evidence type="ECO:0007744" key="30">
    <source>
    </source>
</evidence>
<evidence type="ECO:0007829" key="31">
    <source>
        <dbReference type="PDB" id="6OTN"/>
    </source>
</evidence>
<sequence length="285" mass="32950">MMEAIKKKMQMLKLDKENALDRAEQAEAEQKQAEERSKQLEDELAAMQKKLKGTEDELDKYSEALKDAQEKLELAEKKAADAEAEVASLNRRIQLVEEELDRAQERLATALQKLEEAEKAADESERGMKVIENRALKDEEKMELQEIQLKEAKHIAEEADRKYEEVARKLVIIEGDLERTEERAELAESKCSELEEELKNVTNNLKSLEAQAEKYSQKEDKYEEEIKILTDKLKEAETRAEFAERSVAKLEKTIDDLEDELYAQKLKYKAISEELDHALNDMTSI</sequence>
<proteinExistence type="evidence at protein level"/>
<reference key="1">
    <citation type="journal article" date="1986" name="Nature">
        <title>Tissue-specific expression of the human tropomyosin gene involved in the generation of the trk oncogene.</title>
        <authorList>
            <person name="Reinach F.C."/>
            <person name="McLeod A.R."/>
        </authorList>
    </citation>
    <scope>NUCLEOTIDE SEQUENCE [MRNA] (ISOFORM 1)</scope>
</reference>
<reference key="2">
    <citation type="journal article" date="1986" name="Nucleic Acids Res.">
        <title>The mRNA and RNA-copy pseudogenes encoding TM30nm, a human cytoskeletal tropomyosin.</title>
        <authorList>
            <person name="McLeod A.R."/>
            <person name="Houlker C."/>
            <person name="Talbot K."/>
        </authorList>
    </citation>
    <scope>NUCLEOTIDE SEQUENCE [MRNA] (ISOFORM 2)</scope>
</reference>
<reference key="3">
    <citation type="journal article" date="1988" name="J. Mol. Biol.">
        <title>Organization of the hTMnm gene. Implications for the evolution of muscle and non-muscle tropomyosins.</title>
        <authorList>
            <person name="Clayton L."/>
            <person name="Reinach F.C."/>
            <person name="Chumbley G.M."/>
            <person name="MacLeod A.R."/>
        </authorList>
    </citation>
    <scope>NUCLEOTIDE SEQUENCE (ISOFORMS 1 AND 2)</scope>
</reference>
<reference key="4">
    <citation type="submission" date="2000-07" db="EMBL/GenBank/DDBJ databases">
        <title>Identification and characterization of a novel tropomyosin isoform from a colon cancer cell line T84.</title>
        <authorList>
            <person name="Lin J.J.-C."/>
            <person name="Lin J.L.-C."/>
            <person name="Geng X."/>
            <person name="Das K.M."/>
        </authorList>
    </citation>
    <scope>NUCLEOTIDE SEQUENCE (ISOFORM 3)</scope>
    <source>
        <tissue>Colon cancer</tissue>
    </source>
</reference>
<reference key="5">
    <citation type="journal article" date="2006" name="Nature">
        <title>The DNA sequence and biological annotation of human chromosome 1.</title>
        <authorList>
            <person name="Gregory S.G."/>
            <person name="Barlow K.F."/>
            <person name="McLay K.E."/>
            <person name="Kaul R."/>
            <person name="Swarbreck D."/>
            <person name="Dunham A."/>
            <person name="Scott C.E."/>
            <person name="Howe K.L."/>
            <person name="Woodfine K."/>
            <person name="Spencer C.C.A."/>
            <person name="Jones M.C."/>
            <person name="Gillson C."/>
            <person name="Searle S."/>
            <person name="Zhou Y."/>
            <person name="Kokocinski F."/>
            <person name="McDonald L."/>
            <person name="Evans R."/>
            <person name="Phillips K."/>
            <person name="Atkinson A."/>
            <person name="Cooper R."/>
            <person name="Jones C."/>
            <person name="Hall R.E."/>
            <person name="Andrews T.D."/>
            <person name="Lloyd C."/>
            <person name="Ainscough R."/>
            <person name="Almeida J.P."/>
            <person name="Ambrose K.D."/>
            <person name="Anderson F."/>
            <person name="Andrew R.W."/>
            <person name="Ashwell R.I.S."/>
            <person name="Aubin K."/>
            <person name="Babbage A.K."/>
            <person name="Bagguley C.L."/>
            <person name="Bailey J."/>
            <person name="Beasley H."/>
            <person name="Bethel G."/>
            <person name="Bird C.P."/>
            <person name="Bray-Allen S."/>
            <person name="Brown J.Y."/>
            <person name="Brown A.J."/>
            <person name="Buckley D."/>
            <person name="Burton J."/>
            <person name="Bye J."/>
            <person name="Carder C."/>
            <person name="Chapman J.C."/>
            <person name="Clark S.Y."/>
            <person name="Clarke G."/>
            <person name="Clee C."/>
            <person name="Cobley V."/>
            <person name="Collier R.E."/>
            <person name="Corby N."/>
            <person name="Coville G.J."/>
            <person name="Davies J."/>
            <person name="Deadman R."/>
            <person name="Dunn M."/>
            <person name="Earthrowl M."/>
            <person name="Ellington A.G."/>
            <person name="Errington H."/>
            <person name="Frankish A."/>
            <person name="Frankland J."/>
            <person name="French L."/>
            <person name="Garner P."/>
            <person name="Garnett J."/>
            <person name="Gay L."/>
            <person name="Ghori M.R.J."/>
            <person name="Gibson R."/>
            <person name="Gilby L.M."/>
            <person name="Gillett W."/>
            <person name="Glithero R.J."/>
            <person name="Grafham D.V."/>
            <person name="Griffiths C."/>
            <person name="Griffiths-Jones S."/>
            <person name="Grocock R."/>
            <person name="Hammond S."/>
            <person name="Harrison E.S.I."/>
            <person name="Hart E."/>
            <person name="Haugen E."/>
            <person name="Heath P.D."/>
            <person name="Holmes S."/>
            <person name="Holt K."/>
            <person name="Howden P.J."/>
            <person name="Hunt A.R."/>
            <person name="Hunt S.E."/>
            <person name="Hunter G."/>
            <person name="Isherwood J."/>
            <person name="James R."/>
            <person name="Johnson C."/>
            <person name="Johnson D."/>
            <person name="Joy A."/>
            <person name="Kay M."/>
            <person name="Kershaw J.K."/>
            <person name="Kibukawa M."/>
            <person name="Kimberley A.M."/>
            <person name="King A."/>
            <person name="Knights A.J."/>
            <person name="Lad H."/>
            <person name="Laird G."/>
            <person name="Lawlor S."/>
            <person name="Leongamornlert D.A."/>
            <person name="Lloyd D.M."/>
            <person name="Loveland J."/>
            <person name="Lovell J."/>
            <person name="Lush M.J."/>
            <person name="Lyne R."/>
            <person name="Martin S."/>
            <person name="Mashreghi-Mohammadi M."/>
            <person name="Matthews L."/>
            <person name="Matthews N.S.W."/>
            <person name="McLaren S."/>
            <person name="Milne S."/>
            <person name="Mistry S."/>
            <person name="Moore M.J.F."/>
            <person name="Nickerson T."/>
            <person name="O'Dell C.N."/>
            <person name="Oliver K."/>
            <person name="Palmeiri A."/>
            <person name="Palmer S.A."/>
            <person name="Parker A."/>
            <person name="Patel D."/>
            <person name="Pearce A.V."/>
            <person name="Peck A.I."/>
            <person name="Pelan S."/>
            <person name="Phelps K."/>
            <person name="Phillimore B.J."/>
            <person name="Plumb R."/>
            <person name="Rajan J."/>
            <person name="Raymond C."/>
            <person name="Rouse G."/>
            <person name="Saenphimmachak C."/>
            <person name="Sehra H.K."/>
            <person name="Sheridan E."/>
            <person name="Shownkeen R."/>
            <person name="Sims S."/>
            <person name="Skuce C.D."/>
            <person name="Smith M."/>
            <person name="Steward C."/>
            <person name="Subramanian S."/>
            <person name="Sycamore N."/>
            <person name="Tracey A."/>
            <person name="Tromans A."/>
            <person name="Van Helmond Z."/>
            <person name="Wall M."/>
            <person name="Wallis J.M."/>
            <person name="White S."/>
            <person name="Whitehead S.L."/>
            <person name="Wilkinson J.E."/>
            <person name="Willey D.L."/>
            <person name="Williams H."/>
            <person name="Wilming L."/>
            <person name="Wray P.W."/>
            <person name="Wu Z."/>
            <person name="Coulson A."/>
            <person name="Vaudin M."/>
            <person name="Sulston J.E."/>
            <person name="Durbin R.M."/>
            <person name="Hubbard T."/>
            <person name="Wooster R."/>
            <person name="Dunham I."/>
            <person name="Carter N.P."/>
            <person name="McVean G."/>
            <person name="Ross M.T."/>
            <person name="Harrow J."/>
            <person name="Olson M.V."/>
            <person name="Beck S."/>
            <person name="Rogers J."/>
            <person name="Bentley D.R."/>
        </authorList>
    </citation>
    <scope>NUCLEOTIDE SEQUENCE [LARGE SCALE GENOMIC DNA]</scope>
</reference>
<reference key="6">
    <citation type="submission" date="2005-09" db="EMBL/GenBank/DDBJ databases">
        <authorList>
            <person name="Mural R.J."/>
            <person name="Istrail S."/>
            <person name="Sutton G.G."/>
            <person name="Florea L."/>
            <person name="Halpern A.L."/>
            <person name="Mobarry C.M."/>
            <person name="Lippert R."/>
            <person name="Walenz B."/>
            <person name="Shatkay H."/>
            <person name="Dew I."/>
            <person name="Miller J.R."/>
            <person name="Flanigan M.J."/>
            <person name="Edwards N.J."/>
            <person name="Bolanos R."/>
            <person name="Fasulo D."/>
            <person name="Halldorsson B.V."/>
            <person name="Hannenhalli S."/>
            <person name="Turner R."/>
            <person name="Yooseph S."/>
            <person name="Lu F."/>
            <person name="Nusskern D.R."/>
            <person name="Shue B.C."/>
            <person name="Zheng X.H."/>
            <person name="Zhong F."/>
            <person name="Delcher A.L."/>
            <person name="Huson D.H."/>
            <person name="Kravitz S.A."/>
            <person name="Mouchard L."/>
            <person name="Reinert K."/>
            <person name="Remington K.A."/>
            <person name="Clark A.G."/>
            <person name="Waterman M.S."/>
            <person name="Eichler E.E."/>
            <person name="Adams M.D."/>
            <person name="Hunkapiller M.W."/>
            <person name="Myers E.W."/>
            <person name="Venter J.C."/>
        </authorList>
    </citation>
    <scope>NUCLEOTIDE SEQUENCE [LARGE SCALE GENOMIC DNA]</scope>
</reference>
<reference key="7">
    <citation type="journal article" date="2004" name="Genome Res.">
        <title>The status, quality, and expansion of the NIH full-length cDNA project: the Mammalian Gene Collection (MGC).</title>
        <authorList>
            <consortium name="The MGC Project Team"/>
        </authorList>
    </citation>
    <scope>NUCLEOTIDE SEQUENCE [LARGE SCALE MRNA] (ISOFORMS 1 AND 2)</scope>
    <source>
        <tissue>Bone</tissue>
        <tissue>Kidney</tissue>
        <tissue>Skeletal muscle</tissue>
        <tissue>Uterus</tissue>
    </source>
</reference>
<reference key="8">
    <citation type="journal article" date="2005" name="PLoS Biol.">
        <title>Emergence of young human genes after a burst of retroposition in primates.</title>
        <authorList>
            <person name="Marques A.C."/>
            <person name="Dupanloup I."/>
            <person name="Vinckenbosch N."/>
            <person name="Reymond A."/>
            <person name="Kaessmann H."/>
        </authorList>
    </citation>
    <scope>NUCLEOTIDE SEQUENCE [GENOMIC DNA] OF 2-248 (ISOFORM 2)</scope>
    <scope>IDENTIFICATION OF RCTPM3</scope>
</reference>
<reference key="9">
    <citation type="submission" date="2005-12" db="UniProtKB">
        <authorList>
            <person name="Bienvenut W.V."/>
            <person name="Claeys D."/>
        </authorList>
    </citation>
    <scope>PROTEIN SEQUENCE OF 93-126; 135-150; 154-168 AND 215-245</scope>
    <scope>PARTIAL PROTEIN SEQUENCE (ISOFORMS 2/3)</scope>
    <scope>CLEAVAGE OF INITIATOR METHIONINE (ISOFORMS 2/3)</scope>
    <scope>ACETYLATION AT ALA-2 (ISOFORMS 2/3)</scope>
    <scope>IDENTIFICATION BY MASS SPECTROMETRY</scope>
    <source>
        <tissue>B-cell lymphoma</tissue>
        <tissue>Platelet</tissue>
    </source>
</reference>
<reference key="10">
    <citation type="submission" date="2007-07" db="UniProtKB">
        <authorList>
            <person name="Bienvenut W.V."/>
            <person name="Glen H."/>
            <person name="Brunton V.G."/>
            <person name="Frame M.C."/>
        </authorList>
    </citation>
    <scope>PROTEIN SEQUENCE OF 93-119</scope>
    <scope>PARTIAL PROTEIN SEQUENCE (ISOFORMS 2/3)</scope>
    <scope>CLEAVAGE OF INITIATOR METHIONINE (ISOFORMS 2/3)</scope>
    <scope>ACETYLATION AT ALA-2 (ISOFORMS 2/3)</scope>
    <scope>IDENTIFICATION BY MASS SPECTROMETRY</scope>
    <source>
        <tissue>Osteosarcoma</tissue>
    </source>
</reference>
<reference key="11">
    <citation type="journal article" date="1986" name="Nature">
        <title>A human oncogene formed by the fusion of truncated tropomyosin and protein tyrosine kinase sequences.</title>
        <authorList>
            <person name="Martin-Zanca D."/>
            <person name="Hughes S.H."/>
            <person name="Barbacid M."/>
        </authorList>
    </citation>
    <scope>PARTIAL NUCLEOTIDE SEQUENCE [MRNA] (ISOFORM 2)</scope>
    <scope>CHROMOSOMAL TRANSLOCATION WITH NTRK1</scope>
</reference>
<reference key="12">
    <citation type="journal article" date="1992" name="Electrophoresis">
        <title>Microsequences of 145 proteins recorded in the two-dimensional gel protein database of normal human epidermal keratinocytes.</title>
        <authorList>
            <person name="Rasmussen H.H."/>
            <person name="van Damme J."/>
            <person name="Puype M."/>
            <person name="Gesser B."/>
            <person name="Celis J.E."/>
            <person name="Vandekerckhove J."/>
        </authorList>
    </citation>
    <scope>PARTIAL PROTEIN SEQUENCE</scope>
    <source>
        <tissue>Keratinocyte</tissue>
    </source>
</reference>
<reference key="13">
    <citation type="journal article" date="2003" name="Hypertension">
        <title>Altered tropomyosin expression in essential hypertension.</title>
        <authorList>
            <person name="Dunn S.A."/>
            <person name="Mohteshamzadeh M."/>
            <person name="Daly A.K."/>
            <person name="Thomas T.H."/>
        </authorList>
    </citation>
    <scope>PARTIAL NUCLEOTIDE SEQUENCE [MRNA] (ISOFORM 6)</scope>
    <source>
        <tissue>Skeletal muscle</tissue>
    </source>
</reference>
<reference key="14">
    <citation type="journal article" date="1994" name="Biochem. Biophys. Res. Commun.">
        <title>Erythrocyte tropomodulin binds to the N-terminus of hTM5, a tropomyosin isoform encoded by the gamma-tropomyosin gene.</title>
        <authorList>
            <person name="Sung L.A."/>
            <person name="Lin J.J.-C."/>
        </authorList>
    </citation>
    <scope>INTERACTION WITH TMOD1</scope>
</reference>
<reference key="15">
    <citation type="journal article" date="2008" name="Eur. J. Inflamm.">
        <title>Abnormal proteins in primary breast cancer tissues from 25 Sudanese patients.</title>
        <authorList>
            <person name="Ahamed M.E."/>
            <person name="Ahmed M.E."/>
            <person name="Eltoum A.M."/>
            <person name="Altahir G.O."/>
            <person name="Ahmed K.M."/>
            <person name="Harbi S.O."/>
            <person name="Stansalas J."/>
            <person name="Mohamed A.O."/>
        </authorList>
    </citation>
    <scope>IDENTIFICATION OF RCTPM3 BY MASS SPECTROMETRY</scope>
    <source>
        <tissue>Mammary cancer</tissue>
    </source>
</reference>
<reference key="16">
    <citation type="journal article" date="2008" name="Proc. Natl. Acad. Sci. U.S.A.">
        <title>A quantitative atlas of mitotic phosphorylation.</title>
        <authorList>
            <person name="Dephoure N."/>
            <person name="Zhou C."/>
            <person name="Villen J."/>
            <person name="Beausoleil S.A."/>
            <person name="Bakalarski C.E."/>
            <person name="Elledge S.J."/>
            <person name="Gygi S.P."/>
        </authorList>
    </citation>
    <scope>IDENTIFICATION BY MASS SPECTROMETRY [LARGE SCALE ANALYSIS]</scope>
    <source>
        <tissue>Cervix carcinoma</tissue>
    </source>
</reference>
<reference key="17">
    <citation type="journal article" date="2009" name="Science">
        <title>Lysine acetylation targets protein complexes and co-regulates major cellular functions.</title>
        <authorList>
            <person name="Choudhary C."/>
            <person name="Kumar C."/>
            <person name="Gnad F."/>
            <person name="Nielsen M.L."/>
            <person name="Rehman M."/>
            <person name="Walther T.C."/>
            <person name="Olsen J.V."/>
            <person name="Mann M."/>
        </authorList>
    </citation>
    <scope>ACETYLATION [LARGE SCALE ANALYSIS] AT LYS-177 (ISOFORMS 2; 3 AND 6)</scope>
    <scope>ACETYLATION [LARGE SCALE ANALYSIS] AT LYS-215 (ISOFORMS 2 AND 5)</scope>
    <scope>ACETYLATION [LARGE SCALE ANALYSIS] AT LYS-125 (ISOFORM 7)</scope>
    <scope>IDENTIFICATION BY MASS SPECTROMETRY [LARGE SCALE ANALYSIS]</scope>
</reference>
<reference key="18">
    <citation type="journal article" date="2011" name="BMC Syst. Biol.">
        <title>Initial characterization of the human central proteome.</title>
        <authorList>
            <person name="Burkard T.R."/>
            <person name="Planyavsky M."/>
            <person name="Kaupe I."/>
            <person name="Breitwieser F.P."/>
            <person name="Buerckstuemmer T."/>
            <person name="Bennett K.L."/>
            <person name="Superti-Furga G."/>
            <person name="Colinge J."/>
        </authorList>
    </citation>
    <scope>IDENTIFICATION BY MASS SPECTROMETRY [LARGE SCALE ANALYSIS]</scope>
</reference>
<reference key="19">
    <citation type="journal article" date="2013" name="J. Proteome Res.">
        <title>Toward a comprehensive characterization of a human cancer cell phosphoproteome.</title>
        <authorList>
            <person name="Zhou H."/>
            <person name="Di Palma S."/>
            <person name="Preisinger C."/>
            <person name="Peng M."/>
            <person name="Polat A.N."/>
            <person name="Heck A.J."/>
            <person name="Mohammed S."/>
        </authorList>
    </citation>
    <scope>PHOSPHORYLATION [LARGE SCALE ANALYSIS] AT SER-88</scope>
    <scope>IDENTIFICATION BY MASS SPECTROMETRY [LARGE SCALE ANALYSIS]</scope>
    <source>
        <tissue>Cervix carcinoma</tissue>
        <tissue>Erythroleukemia</tissue>
    </source>
</reference>
<reference key="20">
    <citation type="journal article" date="2014" name="J. Proteomics">
        <title>An enzyme assisted RP-RPLC approach for in-depth analysis of human liver phosphoproteome.</title>
        <authorList>
            <person name="Bian Y."/>
            <person name="Song C."/>
            <person name="Cheng K."/>
            <person name="Dong M."/>
            <person name="Wang F."/>
            <person name="Huang J."/>
            <person name="Sun D."/>
            <person name="Wang L."/>
            <person name="Ye M."/>
            <person name="Zou H."/>
        </authorList>
    </citation>
    <scope>IDENTIFICATION BY MASS SPECTROMETRY [LARGE SCALE ANALYSIS]</scope>
    <source>
        <tissue>Liver</tissue>
    </source>
</reference>
<reference key="21">
    <citation type="journal article" date="2015" name="Proteomics">
        <title>N-terminome analysis of the human mitochondrial proteome.</title>
        <authorList>
            <person name="Vaca Jacome A.S."/>
            <person name="Rabilloud T."/>
            <person name="Schaeffer-Reiss C."/>
            <person name="Rompais M."/>
            <person name="Ayoub D."/>
            <person name="Lane L."/>
            <person name="Bairoch A."/>
            <person name="Van Dorsselaer A."/>
            <person name="Carapito C."/>
        </authorList>
    </citation>
    <scope>IDENTIFICATION BY MASS SPECTROMETRY [LARGE SCALE ANALYSIS]</scope>
</reference>
<reference key="22">
    <citation type="journal article" date="2022" name="Hum. Mutat.">
        <title>Autosomal dominantly inherited myopathy likely caused by the TNNT1 variant p.(Asp65Ala).</title>
        <authorList>
            <person name="Holling T."/>
            <person name="Lisfeld J."/>
            <person name="Johannsen J."/>
            <person name="Matschke J."/>
            <person name="Song F."/>
            <person name="Altmeppen H.C."/>
            <person name="Kutsche K."/>
        </authorList>
    </citation>
    <scope>INTERACTION WITH TNNT1</scope>
</reference>
<reference key="23">
    <citation type="journal article" date="1995" name="Nat. Genet.">
        <title>A mutation in the alpha tropomyosin gene TPM3 associated with autosomal dominant nemaline myopathy.</title>
        <authorList>
            <person name="Laing N.G."/>
            <person name="Wilton S.D."/>
            <person name="Akkari P.A."/>
            <person name="Dorosz S."/>
            <person name="Boundy K."/>
            <person name="Kneebone C."/>
            <person name="Blumbergs P."/>
            <person name="White S."/>
            <person name="Watkins H."/>
            <person name="Love D.R."/>
            <person name="Haan E."/>
        </authorList>
    </citation>
    <scope>VARIANT CMYO4A ARG-9</scope>
</reference>
<reference key="24">
    <citation type="journal article" date="1995" name="Nat. Genet.">
        <authorList>
            <person name="Laing N.G."/>
            <person name="Wilton S.D."/>
            <person name="Akkari P.A."/>
            <person name="Dorosz S."/>
            <person name="Boundy K."/>
            <person name="Kneebone C."/>
            <person name="Blumbergs P."/>
            <person name="White S."/>
            <person name="Watkins H."/>
            <person name="Love D.R."/>
            <person name="Haan E."/>
        </authorList>
    </citation>
    <scope>ERRATUM OF PUBMED:7704029</scope>
</reference>
<reference key="25">
    <citation type="journal article" date="1999" name="J. Clin. Invest.">
        <title>A nemaline myopathy mutation in alpha-tropomyosin causes defective regulation of striated muscle force production.</title>
        <authorList>
            <person name="Michele D.E."/>
            <person name="Albayya F.P."/>
            <person name="Metzger J.M."/>
        </authorList>
    </citation>
    <scope>CHARACTERIZATION OF VARIANT CMYO4A ARG-9</scope>
</reference>
<reference key="26">
    <citation type="journal article" date="2007" name="Neuromuscul. Disord.">
        <title>A second pedigree with autosomal dominant nemaline myopathy caused by TPM3 mutation: a clinical and pathological study.</title>
        <authorList>
            <person name="Penisson-Besnier I."/>
            <person name="Monnier N."/>
            <person name="Toutain A."/>
            <person name="Dubas F."/>
            <person name="Laing N."/>
        </authorList>
    </citation>
    <scope>VARIANT CMYO4A HIS-168</scope>
</reference>
<reference key="27">
    <citation type="journal article" date="2008" name="Ann. Neurol.">
        <title>Mutations in TPM3 are a common cause of congenital fiber type disproportion.</title>
        <authorList>
            <person name="Clarke N.F."/>
            <person name="Kolski H."/>
            <person name="Dye D.E."/>
            <person name="Lim E."/>
            <person name="Smith R.L."/>
            <person name="Patel R."/>
            <person name="Fahey M.C."/>
            <person name="Bellance R."/>
            <person name="Romero N.B."/>
            <person name="Johnson E.S."/>
            <person name="Labarre-Vila A."/>
            <person name="Monnier N."/>
            <person name="Laing N.G."/>
            <person name="North K.N."/>
        </authorList>
    </citation>
    <scope>VARIANTS CMYO4A MET-100; CYS-168; GLY-168; HIS-168; GLU-169 AND GLY-245</scope>
</reference>
<reference key="28">
    <citation type="journal article" date="2008" name="Eur. J. Hum. Genet.">
        <title>Identification of a founder mutation in TPM3 in nemaline myopathy patients of Turkish origin.</title>
        <authorList>
            <person name="Lehtokari V.L."/>
            <person name="Pelin K."/>
            <person name="Donner K."/>
            <person name="Voit T."/>
            <person name="Rudnik-Schoeneborn S."/>
            <person name="Stoetter M."/>
            <person name="Talim B."/>
            <person name="Topaloglu H."/>
            <person name="Laing N.G."/>
            <person name="Wallgren-Pettersson C."/>
        </authorList>
    </citation>
    <scope>INVOLVEMENT IN CMYO4B</scope>
</reference>
<reference key="29">
    <citation type="journal article" date="2009" name="Neurology">
        <title>TPM3 mutation in one of the original cases of cap disease.</title>
        <authorList>
            <person name="Ohlsson M."/>
            <person name="Fidzianska A."/>
            <person name="Tajsharghi H."/>
            <person name="Oldfors A."/>
        </authorList>
    </citation>
    <scope>VARIANT CMYO4A CYS-168</scope>
</reference>
<reference key="30">
    <citation type="journal article" date="2009" name="Neuromuscul. Disord.">
        <title>A TPM3 mutation causing cap myopathy.</title>
        <authorList>
            <person name="De Paula A.M."/>
            <person name="Franques J."/>
            <person name="Fernandez C."/>
            <person name="Monnier N."/>
            <person name="Lunardi J."/>
            <person name="Pellissier J.F."/>
            <person name="Figarella-Branger D."/>
            <person name="Pouget J."/>
        </authorList>
    </citation>
    <scope>VARIANT CMYO4A HIS-168</scope>
</reference>
<reference key="31">
    <citation type="journal article" date="2010" name="Hum. Mutat.">
        <title>Mutations of tropomyosin 3 (TPM3) are common and associated with type 1 myofiber hypotrophy in congenital fiber type disproportion.</title>
        <authorList>
            <person name="Lawlor M.W."/>
            <person name="Dechene E.T."/>
            <person name="Roumm E."/>
            <person name="Geggel A.S."/>
            <person name="Moghadaszadeh B."/>
            <person name="Beggs A.H."/>
        </authorList>
    </citation>
    <scope>VARIANTS CMYO4A VAL-4; PRO-91; HIS-168 AND LYS-241</scope>
</reference>
<reference key="32">
    <citation type="journal article" date="2010" name="Neuromuscul. Disord.">
        <title>Congenital fibre type disproportion associated with mutations in the tropomyosin 3 (TPM3) gene mimicking congenital myasthenia.</title>
        <authorList>
            <person name="Munot P."/>
            <person name="Lashley D."/>
            <person name="Jungbluth H."/>
            <person name="Feng L."/>
            <person name="Pitt M."/>
            <person name="Robb S.A."/>
            <person name="Palace J."/>
            <person name="Jayawant S."/>
            <person name="Kennet R."/>
            <person name="Beeson D."/>
            <person name="Cullup T."/>
            <person name="Abbs S."/>
            <person name="Laing N."/>
            <person name="Sewry C."/>
            <person name="Muntoni F."/>
        </authorList>
    </citation>
    <scope>VARIANTS CMYO4A HIS-168 AND ALA-174</scope>
</reference>
<reference key="33">
    <citation type="journal article" date="2014" name="Hum. Mutat.">
        <title>Mutation update and genotype-phenotype correlations of novel and previously described mutations in TPM2 and TPM3 causing congenital myopathies.</title>
        <authorList>
            <person name="Marttila M."/>
            <person name="Lehtokari V.L."/>
            <person name="Marston S."/>
            <person name="Nyman T.A."/>
            <person name="Barnerias C."/>
            <person name="Beggs A.H."/>
            <person name="Bertini E."/>
            <person name="Ceyhan-Birsoy O."/>
            <person name="Cintas P."/>
            <person name="Gerard M."/>
            <person name="Gilbert-Dussardier B."/>
            <person name="Hogue J.S."/>
            <person name="Longman C."/>
            <person name="Eymard B."/>
            <person name="Frydman M."/>
            <person name="Kang P.B."/>
            <person name="Klinge L."/>
            <person name="Kolski H."/>
            <person name="Lochmueller H."/>
            <person name="Magy L."/>
            <person name="Manel V."/>
            <person name="Mayer M."/>
            <person name="Mercuri E."/>
            <person name="North K.N."/>
            <person name="Peudenier-Robert S."/>
            <person name="Pihko H."/>
            <person name="Probst F.J."/>
            <person name="Reisin R."/>
            <person name="Stewart W."/>
            <person name="Taratuto A.L."/>
            <person name="de Visser M."/>
            <person name="Wilichowski E."/>
            <person name="Winer J."/>
            <person name="Nowak K."/>
            <person name="Laing N.G."/>
            <person name="Winder T.L."/>
            <person name="Monnier N."/>
            <person name="Clarke N.F."/>
            <person name="Pelin K."/>
            <person name="Groenholm M."/>
            <person name="Wallgren-Pettersson C."/>
        </authorList>
    </citation>
    <scope>VARIANTS CMYO4A PHE-88; VAL-100; ALA-151; CYS-168; HIS-168 AND ILE-245</scope>
    <scope>VARIANTS CYS-91 AND LYS-253</scope>
</reference>
<reference key="34">
    <citation type="journal article" date="2014" name="Neuromuscul. Disord.">
        <title>Novel TPM3 mutation in a family with cap myopathy and review of the literature.</title>
        <authorList>
            <person name="Schreckenbach T."/>
            <person name="Schroeder J.M."/>
            <person name="Voit T."/>
            <person name="Abicht A."/>
            <person name="Neuen-Jacob E."/>
            <person name="Roos A."/>
            <person name="Bulst S."/>
            <person name="Kuhl C."/>
            <person name="Schulz J.B."/>
            <person name="Weis J."/>
            <person name="Claeys K.G."/>
        </authorList>
    </citation>
    <scope>VARIANT CMYO4A ILE-149</scope>
</reference>
<feature type="initiator methionine" description="Removed" evidence="8">
    <location>
        <position position="1"/>
    </location>
</feature>
<feature type="chain" id="PRO_0000205632" description="Tropomyosin alpha-3 chain">
    <location>
        <begin position="2"/>
        <end position="285"/>
    </location>
</feature>
<feature type="region of interest" description="Disordered" evidence="9">
    <location>
        <begin position="16"/>
        <end position="44"/>
    </location>
</feature>
<feature type="coiled-coil region" evidence="1">
    <location>
        <begin position="1"/>
        <end position="285"/>
    </location>
</feature>
<feature type="compositionally biased region" description="Basic and acidic residues" evidence="9">
    <location>
        <begin position="16"/>
        <end position="41"/>
    </location>
</feature>
<feature type="modified residue" description="N-acetylmethionine" evidence="8">
    <location>
        <position position="2"/>
    </location>
</feature>
<feature type="modified residue" description="Phosphothreonine" evidence="3">
    <location>
        <position position="54"/>
    </location>
</feature>
<feature type="modified residue" description="Phosphoserine" evidence="6">
    <location>
        <position position="62"/>
    </location>
</feature>
<feature type="modified residue" description="Phosphoserine" evidence="30">
    <location>
        <position position="88"/>
    </location>
</feature>
<feature type="modified residue" description="Phosphothreonine" evidence="3">
    <location>
        <position position="109"/>
    </location>
</feature>
<feature type="modified residue" description="Phosphoserine" evidence="3">
    <location>
        <position position="207"/>
    </location>
</feature>
<feature type="modified residue" description="Phosphoserine" evidence="7">
    <location>
        <position position="216"/>
    </location>
</feature>
<feature type="modified residue" description="Phosphothreonine" evidence="3">
    <location>
        <position position="253"/>
    </location>
</feature>
<feature type="modified residue" description="Phosphotyrosine" evidence="7">
    <location>
        <position position="262"/>
    </location>
</feature>
<feature type="modified residue" description="Phosphoserine" evidence="5">
    <location>
        <position position="272"/>
    </location>
</feature>
<feature type="modified residue" description="Phosphothreonine" evidence="3">
    <location>
        <position position="283"/>
    </location>
</feature>
<feature type="modified residue" description="Phosphoserine" evidence="5">
    <location>
        <position position="284"/>
    </location>
</feature>
<feature type="splice variant" id="VSP_054792" description="In isoform 7." evidence="28">
    <location>
        <begin position="1"/>
        <end position="127"/>
    </location>
</feature>
<feature type="splice variant" id="VSP_006604" description="In isoform 2, isoform 3 and isoform 6." evidence="26 27">
    <original>MMEAIKKKMQMLKLDKENALDRAEQAEAEQKQAEERSKQLEDELAAMQKKLKGTEDELDKYSEALKDAQEKLELAEKKAAD</original>
    <variation>MAGITTIEAVKRKIQVLQQQADDAEERAERLQREVEGERRAREQ</variation>
    <location>
        <begin position="1"/>
        <end position="81"/>
    </location>
</feature>
<feature type="splice variant" id="VSP_047302" description="In isoform 4 and isoform 5." evidence="28">
    <original>MM</original>
    <variation>MAGITTI</variation>
    <location>
        <begin position="1"/>
        <end position="2"/>
    </location>
</feature>
<feature type="splice variant" id="VSP_047303" description="In isoform 4 and isoform 5." evidence="28">
    <original>IKKKMQMLKLDKENALD</original>
    <variation>VKRKIQVLQQQADDAEE</variation>
    <location>
        <begin position="5"/>
        <end position="21"/>
    </location>
</feature>
<feature type="splice variant" id="VSP_047304" description="In isoform 4 and isoform 5." evidence="28">
    <original>QAEAEQKQAEERSKQLEDELAAMQKKLKGTEDELDKYSEALKDAQEKLELAEKKAAD</original>
    <variation>RLQREVEGERRAREQ</variation>
    <location>
        <begin position="25"/>
        <end position="81"/>
    </location>
</feature>
<feature type="splice variant" id="VSP_006605" description="In isoform 2, isoform 3 and isoform 6." evidence="26 27">
    <original>KCSELEEELKNVTNNLKSLEAQA</original>
    <variation>RCREMDEQIRLMDQNLKCLSAAE</variation>
    <location>
        <begin position="190"/>
        <end position="212"/>
    </location>
</feature>
<feature type="splice variant" id="VSP_006607" description="In isoform 3." evidence="28">
    <original>DELYAQKLKYKAISEELDHALNDMTSI</original>
    <variation>ERLYSQLERNRLLSNELKLTLHDLCD</variation>
    <location>
        <begin position="259"/>
        <end position="285"/>
    </location>
</feature>
<feature type="splice variant" id="VSP_047305" description="In isoform 4." evidence="28">
    <original>DE</original>
    <variation>ER</variation>
    <location>
        <begin position="259"/>
        <end position="260"/>
    </location>
</feature>
<feature type="splice variant" id="VSP_006606" description="In isoform 2, isoform 5 and isoform 7." evidence="26 27">
    <original>ELYAQKLKYKAISEELDHALNDMTSI</original>
    <variation>KLKCTKEEHLCTQRMLDQTLLDLNEM</variation>
    <location>
        <begin position="260"/>
        <end position="285"/>
    </location>
</feature>
<feature type="splice variant" id="VSP_047306" description="In isoform 4." evidence="28">
    <original>AQKLKYKAISEELDHALNDMTSI</original>
    <variation>SQLERNRLLSNELKLTLHDLCD</variation>
    <location>
        <begin position="263"/>
        <end position="285"/>
    </location>
</feature>
<feature type="sequence variant" id="VAR_071499" description="In CMYO4A; dbSNP:rs199474711." evidence="16">
    <original>A</original>
    <variation>V</variation>
    <location>
        <position position="4"/>
    </location>
</feature>
<feature type="sequence variant" id="VAR_013460" description="In CMYO4A; decrease in the sensitivity of contraction to activating calcium; dbSNP:rs80358247." evidence="10 22">
    <original>M</original>
    <variation>R</variation>
    <location>
        <position position="9"/>
    </location>
</feature>
<feature type="sequence variant" id="VAR_071500" description="In CMYO4A." evidence="19">
    <original>S</original>
    <variation>F</variation>
    <location>
        <position position="88"/>
    </location>
</feature>
<feature type="sequence variant" id="VAR_071501" description="Found in patients with undefined congenital myopathy; likely pathogenic; dbSNP:rs1571418855." evidence="19">
    <original>R</original>
    <variation>C</variation>
    <location>
        <position position="91"/>
    </location>
</feature>
<feature type="sequence variant" id="VAR_071502" description="In CMYO4A; dbSNP:rs199474713." evidence="16">
    <original>R</original>
    <variation>P</variation>
    <location>
        <position position="91"/>
    </location>
</feature>
<feature type="sequence variant" id="VAR_070066" description="In CMYO4A; dbSNP:rs121964853." evidence="12">
    <original>L</original>
    <variation>M</variation>
    <location>
        <position position="100"/>
    </location>
</feature>
<feature type="sequence variant" id="VAR_071503" description="In CMYO4A; dbSNP:rs121964853." evidence="19">
    <original>L</original>
    <variation>V</variation>
    <location>
        <position position="100"/>
    </location>
</feature>
<feature type="sequence variant" id="VAR_071504" description="In CMYO4A." evidence="18">
    <original>L</original>
    <variation>I</variation>
    <location>
        <position position="149"/>
    </location>
</feature>
<feature type="sequence variant" id="VAR_071505" description="In CMYO4A." evidence="19">
    <original>E</original>
    <variation>A</variation>
    <location>
        <position position="151"/>
    </location>
</feature>
<feature type="sequence variant" id="VAR_070067" description="In CMYO4A; also found in patients with undefined congenital myopathy; dbSNP:rs121964854." evidence="12 14 19">
    <original>R</original>
    <variation>C</variation>
    <location>
        <position position="168"/>
    </location>
</feature>
<feature type="sequence variant" id="VAR_070068" description="In CMYO4A; dbSNP:rs121964854." evidence="12">
    <original>R</original>
    <variation>G</variation>
    <location>
        <position position="168"/>
    </location>
</feature>
<feature type="sequence variant" id="VAR_070069" description="In CMYO4A; also found in patients with undefined congenital myopathy; dbSNP:rs121964852." evidence="11 12 15 16 17 19">
    <original>R</original>
    <variation>H</variation>
    <location>
        <position position="168"/>
    </location>
</feature>
<feature type="sequence variant" id="VAR_070070" description="In CMYO4A; dbSNP:rs199474715." evidence="12">
    <original>K</original>
    <variation>E</variation>
    <location>
        <position position="169"/>
    </location>
</feature>
<feature type="sequence variant" id="VAR_071506" description="In CMYO4A; dbSNP:rs199474716." evidence="17">
    <original>E</original>
    <variation>A</variation>
    <location>
        <position position="174"/>
    </location>
</feature>
<feature type="sequence variant" id="VAR_071507" description="In CMYO4A; dbSNP:rs199474717." evidence="16">
    <original>E</original>
    <variation>K</variation>
    <location>
        <position position="241"/>
    </location>
</feature>
<feature type="sequence variant" id="VAR_070071" description="In CMYO4A; dbSNP:rs199474718." evidence="12">
    <original>R</original>
    <variation>G</variation>
    <location>
        <position position="245"/>
    </location>
</feature>
<feature type="sequence variant" id="VAR_071508" description="In CMYO4A; dbSNP:rs797046047." evidence="19">
    <original>R</original>
    <variation>I</variation>
    <location>
        <position position="245"/>
    </location>
</feature>
<feature type="sequence variant" id="VAR_071509" description="Found in patients with undefined congenital myopathy; likely pathogenic; dbSNP:rs1553248515." evidence="19">
    <original>T</original>
    <variation>K</variation>
    <location>
        <position position="253"/>
    </location>
</feature>
<feature type="sequence conflict" description="In Ref. 13; CAA27243." evidence="28" ref="13">
    <original>K</original>
    <variation>E</variation>
    <location>
        <position position="150"/>
    </location>
</feature>
<feature type="helix" evidence="31">
    <location>
        <begin position="44"/>
        <end position="110"/>
    </location>
</feature>
<feature type="initiator methionine" description="Removed" evidence="28">
    <location sequence="P06753-2">
        <position position="1"/>
    </location>
</feature>
<feature type="modified residue" description="N-acetylalanine" evidence="28">
    <location sequence="P06753-2">
        <position position="2"/>
    </location>
</feature>
<feature type="modified residue" description="N6-acetyllysine" evidence="29">
    <location sequence="P06753-2">
        <position position="177"/>
    </location>
</feature>
<feature type="modified residue" description="N6-acetyllysine" evidence="29">
    <location sequence="P06753-2">
        <position position="215"/>
    </location>
</feature>
<feature type="sequence conflict" description="In Ref. 8; ABC40673." evidence="28" ref="8">
    <original>R</original>
    <variation>Q</variation>
    <location sequence="P06753-2">
        <position position="33"/>
    </location>
</feature>
<feature type="sequence conflict" description="In Ref. 8; ABC40673." evidence="28" ref="8">
    <original>E</original>
    <variation>K</variation>
    <location sequence="P06753-2">
        <position position="43"/>
    </location>
</feature>
<feature type="sequence conflict" description="In Ref. 8; ABC40673." evidence="28" ref="8">
    <original>A</original>
    <variation>P</variation>
    <location sequence="P06753-2">
        <position position="66"/>
    </location>
</feature>
<feature type="sequence conflict" description="In Ref. 8; ABC40673." evidence="28" ref="8">
    <original>D</original>
    <variation>G</variation>
    <location sequence="P06753-2">
        <position position="85"/>
    </location>
</feature>
<feature type="sequence conflict" description="In Ref. 8; ABC40673." evidence="28" ref="8">
    <original>I</original>
    <variation>L</variation>
    <location sequence="P06753-2">
        <position position="110"/>
    </location>
</feature>
<feature type="sequence conflict" description="In Ref. 8; ABC40673." evidence="28" ref="8">
    <original>I</original>
    <variation>T</variation>
    <location sequence="P06753-2">
        <position position="135"/>
    </location>
</feature>
<feature type="sequence conflict" description="In Ref. 8; ABC40673." evidence="28" ref="8">
    <original>A</original>
    <variation>T</variation>
    <location sequence="P06753-2">
        <position position="150"/>
    </location>
</feature>
<feature type="sequence conflict" description="In Ref. 8; ABC40673." evidence="28" ref="8">
    <original>L</original>
    <variation>F</variation>
    <location sequence="P06753-2">
        <position position="192"/>
    </location>
</feature>
<feature type="sequence conflict" description="In Ref. 8; ABC40673." evidence="28" ref="8">
    <original>L</original>
    <variation>P</variation>
    <location sequence="P06753-2">
        <position position="196"/>
    </location>
</feature>
<feature type="sequence conflict" description="In Ref. 8; ABC40673." evidence="28" ref="8">
    <original>R</original>
    <variation>C</variation>
    <location sequence="P06753-2">
        <position position="202"/>
    </location>
</feature>
<feature type="initiator methionine" description="Removed" evidence="28">
    <location sequence="P06753-3">
        <position position="1"/>
    </location>
</feature>
<feature type="modified residue" description="N-acetylalanine" evidence="28">
    <location sequence="P06753-3">
        <position position="2"/>
    </location>
</feature>
<feature type="modified residue" description="N6-acetyllysine" evidence="29">
    <location sequence="P06753-3">
        <position position="177"/>
    </location>
</feature>
<feature type="modified residue" description="N6-acetyllysine" evidence="29">
    <location sequence="P06753-5">
        <position position="215"/>
    </location>
</feature>
<feature type="modified residue" description="N6-acetyllysine" evidence="29">
    <location sequence="P06753-6">
        <position position="177"/>
    </location>
</feature>
<feature type="modified residue" description="N6-acetyllysine" evidence="29">
    <location sequence="P06753-7">
        <position position="125"/>
    </location>
</feature>
<dbReference type="EMBL" id="X04201">
    <property type="protein sequence ID" value="CAA27798.1"/>
    <property type="molecule type" value="mRNA"/>
</dbReference>
<dbReference type="EMBL" id="AY004867">
    <property type="protein sequence ID" value="AAF87083.1"/>
    <property type="molecule type" value="mRNA"/>
</dbReference>
<dbReference type="EMBL" id="X04588">
    <property type="protein sequence ID" value="CAB37185.1"/>
    <property type="molecule type" value="mRNA"/>
</dbReference>
<dbReference type="EMBL" id="AL590431">
    <property type="status" value="NOT_ANNOTATED_CDS"/>
    <property type="molecule type" value="Genomic_DNA"/>
</dbReference>
<dbReference type="EMBL" id="CH471121">
    <property type="protein sequence ID" value="EAW53229.1"/>
    <property type="molecule type" value="Genomic_DNA"/>
</dbReference>
<dbReference type="EMBL" id="CH471121">
    <property type="protein sequence ID" value="EAW53230.1"/>
    <property type="molecule type" value="Genomic_DNA"/>
</dbReference>
<dbReference type="EMBL" id="CH471121">
    <property type="protein sequence ID" value="EAW53231.1"/>
    <property type="molecule type" value="Genomic_DNA"/>
</dbReference>
<dbReference type="EMBL" id="CH471121">
    <property type="protein sequence ID" value="EAW53235.1"/>
    <property type="molecule type" value="Genomic_DNA"/>
</dbReference>
<dbReference type="EMBL" id="BC000771">
    <property type="protein sequence ID" value="AAH00771.1"/>
    <property type="molecule type" value="mRNA"/>
</dbReference>
<dbReference type="EMBL" id="BC008407">
    <property type="protein sequence ID" value="AAH08407.1"/>
    <property type="molecule type" value="mRNA"/>
</dbReference>
<dbReference type="EMBL" id="BC008425">
    <property type="protein sequence ID" value="AAH08425.1"/>
    <property type="molecule type" value="mRNA"/>
</dbReference>
<dbReference type="EMBL" id="BC015403">
    <property type="protein sequence ID" value="AAH15403.1"/>
    <property type="molecule type" value="mRNA"/>
</dbReference>
<dbReference type="EMBL" id="BC072428">
    <property type="protein sequence ID" value="AAH72428.1"/>
    <property type="molecule type" value="mRNA"/>
</dbReference>
<dbReference type="EMBL" id="DQ120714">
    <property type="protein sequence ID" value="ABC40673.1"/>
    <property type="molecule type" value="Genomic_DNA"/>
</dbReference>
<dbReference type="EMBL" id="X03541">
    <property type="protein sequence ID" value="CAA27243.1"/>
    <property type="status" value="ALT_TERM"/>
    <property type="molecule type" value="mRNA"/>
</dbReference>
<dbReference type="EMBL" id="AF474157">
    <property type="protein sequence ID" value="AAL84570.1"/>
    <property type="molecule type" value="mRNA"/>
</dbReference>
<dbReference type="CCDS" id="CCDS1060.1">
    <molecule id="P06753-2"/>
</dbReference>
<dbReference type="CCDS" id="CCDS41400.1">
    <molecule id="P06753-5"/>
</dbReference>
<dbReference type="CCDS" id="CCDS41401.1">
    <molecule id="P06753-4"/>
</dbReference>
<dbReference type="CCDS" id="CCDS41402.1">
    <molecule id="P06753-3"/>
</dbReference>
<dbReference type="CCDS" id="CCDS41403.1">
    <molecule id="P06753-1"/>
</dbReference>
<dbReference type="CCDS" id="CCDS60274.1">
    <molecule id="P06753-7"/>
</dbReference>
<dbReference type="CCDS" id="CCDS60275.1">
    <molecule id="P06753-6"/>
</dbReference>
<dbReference type="PIR" id="A25530">
    <property type="entry name" value="A25530"/>
</dbReference>
<dbReference type="PIR" id="S06210">
    <property type="entry name" value="A24199"/>
</dbReference>
<dbReference type="RefSeq" id="NP_001036816.1">
    <molecule id="P06753-5"/>
    <property type="nucleotide sequence ID" value="NM_001043351.2"/>
</dbReference>
<dbReference type="RefSeq" id="NP_001036817.1">
    <molecule id="P06753-3"/>
    <property type="nucleotide sequence ID" value="NM_001043352.2"/>
</dbReference>
<dbReference type="RefSeq" id="NP_001036818.1">
    <molecule id="P06753-4"/>
    <property type="nucleotide sequence ID" value="NM_001043353.2"/>
</dbReference>
<dbReference type="RefSeq" id="NP_001265118.1">
    <molecule id="P06753-6"/>
    <property type="nucleotide sequence ID" value="NM_001278189.2"/>
</dbReference>
<dbReference type="RefSeq" id="NP_001265120.1">
    <molecule id="P06753-7"/>
    <property type="nucleotide sequence ID" value="NM_001278191.2"/>
</dbReference>
<dbReference type="RefSeq" id="NP_001351612.1">
    <molecule id="P06753-6"/>
    <property type="nucleotide sequence ID" value="NM_001364683.1"/>
</dbReference>
<dbReference type="RefSeq" id="NP_689476.2">
    <molecule id="P06753-1"/>
    <property type="nucleotide sequence ID" value="NM_152263.4"/>
</dbReference>
<dbReference type="RefSeq" id="NP_705935.1">
    <molecule id="P06753-2"/>
    <property type="nucleotide sequence ID" value="NM_153649.4"/>
</dbReference>
<dbReference type="PDB" id="6OTN">
    <property type="method" value="X-ray"/>
    <property type="resolution" value="2.40 A"/>
    <property type="chains" value="A/B/C/D=44-117"/>
</dbReference>
<dbReference type="PDBsum" id="6OTN"/>
<dbReference type="SMR" id="P06753"/>
<dbReference type="BioGRID" id="113023">
    <property type="interactions" value="399"/>
</dbReference>
<dbReference type="CORUM" id="P06753"/>
<dbReference type="FunCoup" id="P06753">
    <property type="interactions" value="1064"/>
</dbReference>
<dbReference type="IntAct" id="P06753">
    <property type="interactions" value="169"/>
</dbReference>
<dbReference type="MINT" id="P06753"/>
<dbReference type="STRING" id="9606.ENSP00000498577"/>
<dbReference type="ChEMBL" id="CHEMBL3804747"/>
<dbReference type="DrugBank" id="DB12695">
    <property type="generic name" value="Phenethyl Isothiocyanate"/>
</dbReference>
<dbReference type="GlyGen" id="P06753">
    <property type="glycosylation" value="1 site, 1 O-linked glycan (1 site)"/>
</dbReference>
<dbReference type="iPTMnet" id="P06753"/>
<dbReference type="MetOSite" id="P06753"/>
<dbReference type="PhosphoSitePlus" id="P06753"/>
<dbReference type="SwissPalm" id="P06753"/>
<dbReference type="BioMuta" id="TPM3"/>
<dbReference type="DMDM" id="519668659"/>
<dbReference type="jPOST" id="P06753"/>
<dbReference type="MassIVE" id="P06753"/>
<dbReference type="PaxDb" id="9606-ENSP00000357516"/>
<dbReference type="PeptideAtlas" id="P06753"/>
<dbReference type="ProteomicsDB" id="51930">
    <molecule id="P06753-1"/>
</dbReference>
<dbReference type="ProteomicsDB" id="51931">
    <molecule id="P06753-2"/>
</dbReference>
<dbReference type="ProteomicsDB" id="51932">
    <molecule id="P06753-3"/>
</dbReference>
<dbReference type="ProteomicsDB" id="65387"/>
<dbReference type="ProteomicsDB" id="65390"/>
<dbReference type="ProteomicsDB" id="65392"/>
<dbReference type="ProteomicsDB" id="65394"/>
<dbReference type="Pumba" id="P06753"/>
<dbReference type="Antibodypedia" id="1682">
    <property type="antibodies" value="232 antibodies from 33 providers"/>
</dbReference>
<dbReference type="DNASU" id="7170"/>
<dbReference type="Ensembl" id="ENST00000302206.9">
    <molecule id="P06753-7"/>
    <property type="protein sequence ID" value="ENSP00000307712.5"/>
    <property type="gene ID" value="ENSG00000143549.22"/>
</dbReference>
<dbReference type="Ensembl" id="ENST00000323144.12">
    <molecule id="P06753-4"/>
    <property type="protein sequence ID" value="ENSP00000357518.4"/>
    <property type="gene ID" value="ENSG00000143549.22"/>
</dbReference>
<dbReference type="Ensembl" id="ENST00000328159.9">
    <molecule id="P06753-6"/>
    <property type="protein sequence ID" value="ENSP00000357520.1"/>
    <property type="gene ID" value="ENSG00000143549.22"/>
</dbReference>
<dbReference type="Ensembl" id="ENST00000330188.13">
    <molecule id="P06753-5"/>
    <property type="protein sequence ID" value="ENSP00000339035.7"/>
    <property type="gene ID" value="ENSG00000143549.22"/>
</dbReference>
<dbReference type="Ensembl" id="ENST00000341485.10">
    <molecule id="P06753-4"/>
    <property type="protein sequence ID" value="ENSP00000341653.6"/>
    <property type="gene ID" value="ENSG00000143549.22"/>
</dbReference>
<dbReference type="Ensembl" id="ENST00000368531.6">
    <molecule id="P06753-3"/>
    <property type="protein sequence ID" value="ENSP00000357517.2"/>
    <property type="gene ID" value="ENSG00000143549.22"/>
</dbReference>
<dbReference type="Ensembl" id="ENST00000368533.8">
    <molecule id="P06753-2"/>
    <property type="protein sequence ID" value="ENSP00000357521.3"/>
    <property type="gene ID" value="ENSG00000143549.22"/>
</dbReference>
<dbReference type="Ensembl" id="ENST00000651641.1">
    <molecule id="P06753-1"/>
    <property type="protein sequence ID" value="ENSP00000498577.1"/>
    <property type="gene ID" value="ENSG00000143549.22"/>
</dbReference>
<dbReference type="GeneID" id="7170"/>
<dbReference type="KEGG" id="hsa:7170"/>
<dbReference type="MANE-Select" id="ENST00000651641.1">
    <property type="protein sequence ID" value="ENSP00000498577.1"/>
    <property type="RefSeq nucleotide sequence ID" value="NM_152263.4"/>
    <property type="RefSeq protein sequence ID" value="NP_689476.2"/>
</dbReference>
<dbReference type="UCSC" id="uc001fdy.2">
    <molecule id="P06753-1"/>
    <property type="organism name" value="human"/>
</dbReference>
<dbReference type="AGR" id="HGNC:12012"/>
<dbReference type="CTD" id="7170"/>
<dbReference type="DisGeNET" id="7170"/>
<dbReference type="GeneCards" id="TPM3"/>
<dbReference type="HGNC" id="HGNC:12012">
    <property type="gene designation" value="TPM3"/>
</dbReference>
<dbReference type="HPA" id="ENSG00000143549">
    <property type="expression patterns" value="Group enriched (skeletal muscle, tongue)"/>
</dbReference>
<dbReference type="MalaCards" id="TPM3"/>
<dbReference type="MIM" id="164970">
    <property type="type" value="gene"/>
</dbReference>
<dbReference type="MIM" id="191030">
    <property type="type" value="gene"/>
</dbReference>
<dbReference type="MIM" id="255310">
    <property type="type" value="phenotype"/>
</dbReference>
<dbReference type="MIM" id="609284">
    <property type="type" value="phenotype"/>
</dbReference>
<dbReference type="neXtProt" id="NX_P06753"/>
<dbReference type="OpenTargets" id="ENSG00000143549"/>
<dbReference type="Orphanet" id="171881">
    <property type="disease" value="Cap myopathy"/>
</dbReference>
<dbReference type="Orphanet" id="171439">
    <property type="disease" value="Childhood-onset nemaline myopathy"/>
</dbReference>
<dbReference type="Orphanet" id="2020">
    <property type="disease" value="Congenital fiber-type disproportion myopathy"/>
</dbReference>
<dbReference type="Orphanet" id="476406">
    <property type="disease" value="Congenital generalized hypercontractile muscle stiffness syndrome"/>
</dbReference>
<dbReference type="Orphanet" id="178342">
    <property type="disease" value="Inflammatory myofibroblastic tumor"/>
</dbReference>
<dbReference type="Orphanet" id="171433">
    <property type="disease" value="Intermediate nemaline myopathy"/>
</dbReference>
<dbReference type="PharmGKB" id="PA36692"/>
<dbReference type="VEuPathDB" id="HostDB:ENSG00000143549"/>
<dbReference type="eggNOG" id="KOG1003">
    <property type="taxonomic scope" value="Eukaryota"/>
</dbReference>
<dbReference type="GeneTree" id="ENSGT01030000234542"/>
<dbReference type="HOGENOM" id="CLU_055027_3_0_1"/>
<dbReference type="InParanoid" id="P06753"/>
<dbReference type="OMA" id="EKKAADX"/>
<dbReference type="OrthoDB" id="128924at2759"/>
<dbReference type="PAN-GO" id="P06753">
    <property type="GO annotations" value="4 GO annotations based on evolutionary models"/>
</dbReference>
<dbReference type="PhylomeDB" id="P06753"/>
<dbReference type="TreeFam" id="TF351519"/>
<dbReference type="PathwayCommons" id="P06753"/>
<dbReference type="Reactome" id="R-HSA-390522">
    <property type="pathway name" value="Striated Muscle Contraction"/>
</dbReference>
<dbReference type="Reactome" id="R-HSA-445355">
    <property type="pathway name" value="Smooth Muscle Contraction"/>
</dbReference>
<dbReference type="Reactome" id="R-HSA-9013424">
    <property type="pathway name" value="RHOV GTPase cycle"/>
</dbReference>
<dbReference type="Reactome" id="R-HSA-9725370">
    <property type="pathway name" value="Signaling by ALK fusions and activated point mutants"/>
</dbReference>
<dbReference type="SignaLink" id="P06753"/>
<dbReference type="SIGNOR" id="P06753"/>
<dbReference type="BioGRID-ORCS" id="7170">
    <property type="hits" value="15 hits in 1152 CRISPR screens"/>
</dbReference>
<dbReference type="CD-CODE" id="DEE660B4">
    <property type="entry name" value="Stress granule"/>
</dbReference>
<dbReference type="CD-CODE" id="FB4E32DD">
    <property type="entry name" value="Presynaptic clusters and postsynaptic densities"/>
</dbReference>
<dbReference type="ChiTaRS" id="TPM3">
    <property type="organism name" value="human"/>
</dbReference>
<dbReference type="GeneWiki" id="Tropomyosin_3"/>
<dbReference type="GenomeRNAi" id="7170"/>
<dbReference type="Pharos" id="P06753">
    <property type="development level" value="Tbio"/>
</dbReference>
<dbReference type="PRO" id="PR:P06753"/>
<dbReference type="Proteomes" id="UP000005640">
    <property type="component" value="Chromosome 1"/>
</dbReference>
<dbReference type="RNAct" id="P06753">
    <property type="molecule type" value="protein"/>
</dbReference>
<dbReference type="Bgee" id="ENSG00000143549">
    <property type="expression patterns" value="Expressed in hindlimb stylopod muscle and 154 other cell types or tissues"/>
</dbReference>
<dbReference type="ExpressionAtlas" id="P06753">
    <property type="expression patterns" value="baseline and differential"/>
</dbReference>
<dbReference type="GO" id="GO:0015629">
    <property type="term" value="C:actin cytoskeleton"/>
    <property type="evidence" value="ECO:0000314"/>
    <property type="project" value="HPA"/>
</dbReference>
<dbReference type="GO" id="GO:0005884">
    <property type="term" value="C:actin filament"/>
    <property type="evidence" value="ECO:0000318"/>
    <property type="project" value="GO_Central"/>
</dbReference>
<dbReference type="GO" id="GO:0005856">
    <property type="term" value="C:cytoskeleton"/>
    <property type="evidence" value="ECO:0000304"/>
    <property type="project" value="UniProtKB"/>
</dbReference>
<dbReference type="GO" id="GO:0005829">
    <property type="term" value="C:cytosol"/>
    <property type="evidence" value="ECO:0000314"/>
    <property type="project" value="HPA"/>
</dbReference>
<dbReference type="GO" id="GO:0070062">
    <property type="term" value="C:extracellular exosome"/>
    <property type="evidence" value="ECO:0007005"/>
    <property type="project" value="UniProtKB"/>
</dbReference>
<dbReference type="GO" id="GO:0005739">
    <property type="term" value="C:mitochondrion"/>
    <property type="evidence" value="ECO:0006056"/>
    <property type="project" value="FlyBase"/>
</dbReference>
<dbReference type="GO" id="GO:0005862">
    <property type="term" value="C:muscle thin filament tropomyosin"/>
    <property type="evidence" value="ECO:0000304"/>
    <property type="project" value="UniProtKB"/>
</dbReference>
<dbReference type="GO" id="GO:0001725">
    <property type="term" value="C:stress fiber"/>
    <property type="evidence" value="ECO:0000314"/>
    <property type="project" value="MGI"/>
</dbReference>
<dbReference type="GO" id="GO:0051015">
    <property type="term" value="F:actin filament binding"/>
    <property type="evidence" value="ECO:0000318"/>
    <property type="project" value="GO_Central"/>
</dbReference>
<dbReference type="GO" id="GO:0007015">
    <property type="term" value="P:actin filament organization"/>
    <property type="evidence" value="ECO:0000318"/>
    <property type="project" value="GO_Central"/>
</dbReference>
<dbReference type="GO" id="GO:0006936">
    <property type="term" value="P:muscle contraction"/>
    <property type="evidence" value="ECO:0000318"/>
    <property type="project" value="GO_Central"/>
</dbReference>
<dbReference type="FunFam" id="1.20.5.170:FF:000005">
    <property type="entry name" value="Tropomyosin alpha-1 chain"/>
    <property type="match status" value="1"/>
</dbReference>
<dbReference type="FunFam" id="1.20.5.170:FF:000001">
    <property type="entry name" value="Tropomyosin alpha-1 chain isoform 1"/>
    <property type="match status" value="1"/>
</dbReference>
<dbReference type="FunFam" id="1.20.5.340:FF:000001">
    <property type="entry name" value="Tropomyosin alpha-1 chain isoform 2"/>
    <property type="match status" value="1"/>
</dbReference>
<dbReference type="Gene3D" id="1.20.5.170">
    <property type="match status" value="2"/>
</dbReference>
<dbReference type="Gene3D" id="1.20.5.340">
    <property type="match status" value="1"/>
</dbReference>
<dbReference type="InterPro" id="IPR000533">
    <property type="entry name" value="Tropomyosin"/>
</dbReference>
<dbReference type="PANTHER" id="PTHR19269">
    <property type="entry name" value="TROPOMYOSIN"/>
    <property type="match status" value="1"/>
</dbReference>
<dbReference type="Pfam" id="PF00261">
    <property type="entry name" value="Tropomyosin"/>
    <property type="match status" value="1"/>
</dbReference>
<dbReference type="PRINTS" id="PR00194">
    <property type="entry name" value="TROPOMYOSIN"/>
</dbReference>
<dbReference type="SUPFAM" id="SSF57997">
    <property type="entry name" value="Tropomyosin"/>
    <property type="match status" value="1"/>
</dbReference>
<dbReference type="PROSITE" id="PS00326">
    <property type="entry name" value="TROPOMYOSIN"/>
    <property type="match status" value="1"/>
</dbReference>
<accession>P06753</accession>
<accession>D3DV71</accession>
<accession>P12324</accession>
<accession>Q2QD06</accession>
<accession>Q5VU58</accession>
<accession>Q5VU63</accession>
<accession>Q5VU66</accession>
<accession>Q5VU71</accession>
<accession>Q5VU72</accession>
<accession>Q8TCG3</accession>
<accession>Q969Q2</accession>
<accession>Q9NQH8</accession>
<protein>
    <recommendedName>
        <fullName>Tropomyosin alpha-3 chain</fullName>
    </recommendedName>
    <alternativeName>
        <fullName>Gamma-tropomyosin</fullName>
    </alternativeName>
    <alternativeName>
        <fullName>Tropomyosin-3</fullName>
    </alternativeName>
    <alternativeName>
        <fullName>Tropomyosin-5</fullName>
        <shortName>hTM5</shortName>
    </alternativeName>
</protein>